<keyword id="KW-0963">Cytoplasm</keyword>
<keyword id="KW-0238">DNA-binding</keyword>
<keyword id="KW-0287">Flowering</keyword>
<keyword id="KW-0539">Nucleus</keyword>
<keyword id="KW-1185">Reference proteome</keyword>
<keyword id="KW-0804">Transcription</keyword>
<keyword id="KW-0805">Transcription regulation</keyword>
<sequence>MEPSSQPQPAIGVVAGGSQVYPAYRPAATVPTAPAVIPAGSQPAPSFPANPDQLSAQHQLVYQQAQQFHQQLQQQQQRQLQQFWAERLVDIEQTTDFKNHSLPLARIKKIMKADEDVRMISAEAPVIFAKACEIFILELTLRSWMHTEENKRRTLQKNDIAAAITRTDMYDFLVDIVPRDDLKEEGVGLPRAGLPPLGVPADSYPYGYYVPQQQVPGAGIAYGGQQGHPGYLWQDPQEQQEEPPAEQQSD</sequence>
<comment type="function">
    <text evidence="1 4">Probable transcription factor involved in the regulation of flowering time under long day (LD) conditions. Functions as a repressor of flowering, independently of HD1 and GHD7. Controls flowering time by negatively regulating the expression of EHD1 and HD3A (PubMed:26542958). Component of the NF-Y/HAP transcription factor complex (By similarity).</text>
</comment>
<comment type="subunit">
    <text evidence="1 3 4">Heterotrimeric transcription factor composed of three components, NF-YA, NF-YB and NF-YC. NF-YB and NF-YC must interact and dimerize for NF-YA association and DNA binding (By similarity). Interacts with NFYB2 (PubMed:18193457). Interacts with NFYB8, NFYB10 and HD5/NFYB11 (PubMed:26542958).</text>
</comment>
<comment type="subcellular location">
    <subcellularLocation>
        <location evidence="4">Nucleus</location>
    </subcellularLocation>
    <subcellularLocation>
        <location evidence="4">Cytoplasm</location>
    </subcellularLocation>
</comment>
<comment type="induction">
    <text evidence="4">Circadian-regulation under long day (LD) conditions. Expression increases in the middle of daytime, peaks around the end of the light period and gradually decreases during the dark period and beginning of daylight.</text>
</comment>
<comment type="similarity">
    <text evidence="7">Belongs to the NFYC/HAP5 subunit family.</text>
</comment>
<name>NFYC4_ORYSJ</name>
<evidence type="ECO:0000250" key="1"/>
<evidence type="ECO:0000256" key="2">
    <source>
        <dbReference type="SAM" id="MobiDB-lite"/>
    </source>
</evidence>
<evidence type="ECO:0000269" key="3">
    <source>
    </source>
</evidence>
<evidence type="ECO:0000269" key="4">
    <source>
    </source>
</evidence>
<evidence type="ECO:0000303" key="5">
    <source>
    </source>
</evidence>
<evidence type="ECO:0000303" key="6">
    <source>
    </source>
</evidence>
<evidence type="ECO:0000305" key="7"/>
<evidence type="ECO:0000312" key="8">
    <source>
        <dbReference type="EMBL" id="BAD45412.1"/>
    </source>
</evidence>
<evidence type="ECO:0000312" key="9">
    <source>
        <dbReference type="EMBL" id="BAF20226.1"/>
    </source>
</evidence>
<evidence type="ECO:0000312" key="10">
    <source>
        <dbReference type="EMBL" id="EAZ37943.1"/>
    </source>
</evidence>
<gene>
    <name evidence="7" type="primary">NFYC4</name>
    <name evidence="5" type="synonym">HAP5B</name>
    <name evidence="9" type="ordered locus">Os06g0667100</name>
    <name evidence="7" type="ordered locus">LOC_Os06g45640</name>
    <name evidence="10" type="ORF">OsJ_22293</name>
    <name evidence="8" type="ORF">P0637D03.35</name>
</gene>
<dbReference type="EMBL" id="AB288042">
    <property type="protein sequence ID" value="BAF64450.1"/>
    <property type="molecule type" value="Genomic_DNA"/>
</dbReference>
<dbReference type="EMBL" id="AP003633">
    <property type="protein sequence ID" value="BAD45412.1"/>
    <property type="molecule type" value="Genomic_DNA"/>
</dbReference>
<dbReference type="EMBL" id="AP008212">
    <property type="protein sequence ID" value="BAF20226.1"/>
    <property type="molecule type" value="Genomic_DNA"/>
</dbReference>
<dbReference type="EMBL" id="AP014962">
    <property type="protein sequence ID" value="BAS99044.1"/>
    <property type="molecule type" value="Genomic_DNA"/>
</dbReference>
<dbReference type="EMBL" id="CM000143">
    <property type="protein sequence ID" value="EAZ37943.1"/>
    <property type="molecule type" value="Genomic_DNA"/>
</dbReference>
<dbReference type="EMBL" id="AK066630">
    <property type="protein sequence ID" value="BAG90057.1"/>
    <property type="molecule type" value="mRNA"/>
</dbReference>
<dbReference type="RefSeq" id="XP_015644345.1">
    <property type="nucleotide sequence ID" value="XM_015788859.1"/>
</dbReference>
<dbReference type="SMR" id="Q655V5"/>
<dbReference type="FunCoup" id="Q655V5">
    <property type="interactions" value="1203"/>
</dbReference>
<dbReference type="STRING" id="39947.Q655V5"/>
<dbReference type="PaxDb" id="39947-Q655V5"/>
<dbReference type="EnsemblPlants" id="Os06t0667100-01">
    <property type="protein sequence ID" value="Os06t0667100-01"/>
    <property type="gene ID" value="Os06g0667100"/>
</dbReference>
<dbReference type="Gramene" id="Os06t0667100-01">
    <property type="protein sequence ID" value="Os06t0667100-01"/>
    <property type="gene ID" value="Os06g0667100"/>
</dbReference>
<dbReference type="KEGG" id="dosa:Os06g0667100"/>
<dbReference type="eggNOG" id="KOG1657">
    <property type="taxonomic scope" value="Eukaryota"/>
</dbReference>
<dbReference type="HOGENOM" id="CLU_045277_0_0_1"/>
<dbReference type="InParanoid" id="Q655V5"/>
<dbReference type="OMA" id="YPRAATI"/>
<dbReference type="OrthoDB" id="1272441at2759"/>
<dbReference type="Proteomes" id="UP000000763">
    <property type="component" value="Chromosome 6"/>
</dbReference>
<dbReference type="Proteomes" id="UP000007752">
    <property type="component" value="Chromosome 6"/>
</dbReference>
<dbReference type="Proteomes" id="UP000059680">
    <property type="component" value="Chromosome 6"/>
</dbReference>
<dbReference type="GO" id="GO:0005737">
    <property type="term" value="C:cytoplasm"/>
    <property type="evidence" value="ECO:0000314"/>
    <property type="project" value="UniProtKB"/>
</dbReference>
<dbReference type="GO" id="GO:0005634">
    <property type="term" value="C:nucleus"/>
    <property type="evidence" value="ECO:0000314"/>
    <property type="project" value="UniProtKB"/>
</dbReference>
<dbReference type="GO" id="GO:0003677">
    <property type="term" value="F:DNA binding"/>
    <property type="evidence" value="ECO:0007669"/>
    <property type="project" value="UniProtKB-KW"/>
</dbReference>
<dbReference type="GO" id="GO:0000981">
    <property type="term" value="F:DNA-binding transcription factor activity, RNA polymerase II-specific"/>
    <property type="evidence" value="ECO:0000318"/>
    <property type="project" value="GO_Central"/>
</dbReference>
<dbReference type="GO" id="GO:0046982">
    <property type="term" value="F:protein heterodimerization activity"/>
    <property type="evidence" value="ECO:0007669"/>
    <property type="project" value="InterPro"/>
</dbReference>
<dbReference type="GO" id="GO:0009908">
    <property type="term" value="P:flower development"/>
    <property type="evidence" value="ECO:0007669"/>
    <property type="project" value="UniProtKB-KW"/>
</dbReference>
<dbReference type="GO" id="GO:0048579">
    <property type="term" value="P:negative regulation of long-day photoperiodism, flowering"/>
    <property type="evidence" value="ECO:0000315"/>
    <property type="project" value="UniProtKB"/>
</dbReference>
<dbReference type="GO" id="GO:0006357">
    <property type="term" value="P:regulation of transcription by RNA polymerase II"/>
    <property type="evidence" value="ECO:0000318"/>
    <property type="project" value="GO_Central"/>
</dbReference>
<dbReference type="CDD" id="cd22908">
    <property type="entry name" value="HFD_NFYC-like"/>
    <property type="match status" value="1"/>
</dbReference>
<dbReference type="FunFam" id="1.10.20.10:FF:000006">
    <property type="entry name" value="Nuclear transcription factor Y subunit gamma"/>
    <property type="match status" value="1"/>
</dbReference>
<dbReference type="Gene3D" id="1.10.20.10">
    <property type="entry name" value="Histone, subunit A"/>
    <property type="match status" value="1"/>
</dbReference>
<dbReference type="InterPro" id="IPR009072">
    <property type="entry name" value="Histone-fold"/>
</dbReference>
<dbReference type="InterPro" id="IPR007125">
    <property type="entry name" value="Histone_H2A/H2B/H3"/>
</dbReference>
<dbReference type="InterPro" id="IPR050568">
    <property type="entry name" value="Transcr_DNA_Rep_Reg"/>
</dbReference>
<dbReference type="PANTHER" id="PTHR10252">
    <property type="entry name" value="HISTONE-LIKE TRANSCRIPTION FACTOR CCAAT-RELATED"/>
    <property type="match status" value="1"/>
</dbReference>
<dbReference type="PANTHER" id="PTHR10252:SF145">
    <property type="entry name" value="NUCLEAR TRANSCRIPTION FACTOR Y SUBUNIT C-4"/>
    <property type="match status" value="1"/>
</dbReference>
<dbReference type="Pfam" id="PF00125">
    <property type="entry name" value="Histone"/>
    <property type="match status" value="1"/>
</dbReference>
<dbReference type="SUPFAM" id="SSF47113">
    <property type="entry name" value="Histone-fold"/>
    <property type="match status" value="1"/>
</dbReference>
<accession>Q655V5</accession>
<reference key="1">
    <citation type="journal article" date="2008" name="Mol. Genet. Genomics">
        <title>Identification, characterization and interaction of HAP family genes in rice.</title>
        <authorList>
            <person name="Thirumurugan T."/>
            <person name="Ito Y."/>
            <person name="Kubo T."/>
            <person name="Serizawa A."/>
            <person name="Kurata N."/>
        </authorList>
    </citation>
    <scope>NUCLEOTIDE SEQUENCE [GENOMIC DNA]</scope>
    <scope>INTERACTION WITH NFYB2</scope>
    <source>
        <strain>cv. Nipponbare</strain>
    </source>
</reference>
<reference key="2">
    <citation type="journal article" date="2005" name="Nature">
        <title>The map-based sequence of the rice genome.</title>
        <authorList>
            <consortium name="International rice genome sequencing project (IRGSP)"/>
        </authorList>
    </citation>
    <scope>NUCLEOTIDE SEQUENCE [LARGE SCALE GENOMIC DNA]</scope>
    <source>
        <strain>cv. Nipponbare</strain>
    </source>
</reference>
<reference key="3">
    <citation type="journal article" date="2008" name="Nucleic Acids Res.">
        <title>The rice annotation project database (RAP-DB): 2008 update.</title>
        <authorList>
            <consortium name="The rice annotation project (RAP)"/>
        </authorList>
    </citation>
    <scope>GENOME REANNOTATION</scope>
    <source>
        <strain>cv. Nipponbare</strain>
    </source>
</reference>
<reference key="4">
    <citation type="journal article" date="2013" name="Rice">
        <title>Improvement of the Oryza sativa Nipponbare reference genome using next generation sequence and optical map data.</title>
        <authorList>
            <person name="Kawahara Y."/>
            <person name="de la Bastide M."/>
            <person name="Hamilton J.P."/>
            <person name="Kanamori H."/>
            <person name="McCombie W.R."/>
            <person name="Ouyang S."/>
            <person name="Schwartz D.C."/>
            <person name="Tanaka T."/>
            <person name="Wu J."/>
            <person name="Zhou S."/>
            <person name="Childs K.L."/>
            <person name="Davidson R.M."/>
            <person name="Lin H."/>
            <person name="Quesada-Ocampo L."/>
            <person name="Vaillancourt B."/>
            <person name="Sakai H."/>
            <person name="Lee S.S."/>
            <person name="Kim J."/>
            <person name="Numa H."/>
            <person name="Itoh T."/>
            <person name="Buell C.R."/>
            <person name="Matsumoto T."/>
        </authorList>
    </citation>
    <scope>GENOME REANNOTATION</scope>
    <source>
        <strain>cv. Nipponbare</strain>
    </source>
</reference>
<reference key="5">
    <citation type="journal article" date="2005" name="PLoS Biol.">
        <title>The genomes of Oryza sativa: a history of duplications.</title>
        <authorList>
            <person name="Yu J."/>
            <person name="Wang J."/>
            <person name="Lin W."/>
            <person name="Li S."/>
            <person name="Li H."/>
            <person name="Zhou J."/>
            <person name="Ni P."/>
            <person name="Dong W."/>
            <person name="Hu S."/>
            <person name="Zeng C."/>
            <person name="Zhang J."/>
            <person name="Zhang Y."/>
            <person name="Li R."/>
            <person name="Xu Z."/>
            <person name="Li S."/>
            <person name="Li X."/>
            <person name="Zheng H."/>
            <person name="Cong L."/>
            <person name="Lin L."/>
            <person name="Yin J."/>
            <person name="Geng J."/>
            <person name="Li G."/>
            <person name="Shi J."/>
            <person name="Liu J."/>
            <person name="Lv H."/>
            <person name="Li J."/>
            <person name="Wang J."/>
            <person name="Deng Y."/>
            <person name="Ran L."/>
            <person name="Shi X."/>
            <person name="Wang X."/>
            <person name="Wu Q."/>
            <person name="Li C."/>
            <person name="Ren X."/>
            <person name="Wang J."/>
            <person name="Wang X."/>
            <person name="Li D."/>
            <person name="Liu D."/>
            <person name="Zhang X."/>
            <person name="Ji Z."/>
            <person name="Zhao W."/>
            <person name="Sun Y."/>
            <person name="Zhang Z."/>
            <person name="Bao J."/>
            <person name="Han Y."/>
            <person name="Dong L."/>
            <person name="Ji J."/>
            <person name="Chen P."/>
            <person name="Wu S."/>
            <person name="Liu J."/>
            <person name="Xiao Y."/>
            <person name="Bu D."/>
            <person name="Tan J."/>
            <person name="Yang L."/>
            <person name="Ye C."/>
            <person name="Zhang J."/>
            <person name="Xu J."/>
            <person name="Zhou Y."/>
            <person name="Yu Y."/>
            <person name="Zhang B."/>
            <person name="Zhuang S."/>
            <person name="Wei H."/>
            <person name="Liu B."/>
            <person name="Lei M."/>
            <person name="Yu H."/>
            <person name="Li Y."/>
            <person name="Xu H."/>
            <person name="Wei S."/>
            <person name="He X."/>
            <person name="Fang L."/>
            <person name="Zhang Z."/>
            <person name="Zhang Y."/>
            <person name="Huang X."/>
            <person name="Su Z."/>
            <person name="Tong W."/>
            <person name="Li J."/>
            <person name="Tong Z."/>
            <person name="Li S."/>
            <person name="Ye J."/>
            <person name="Wang L."/>
            <person name="Fang L."/>
            <person name="Lei T."/>
            <person name="Chen C.-S."/>
            <person name="Chen H.-C."/>
            <person name="Xu Z."/>
            <person name="Li H."/>
            <person name="Huang H."/>
            <person name="Zhang F."/>
            <person name="Xu H."/>
            <person name="Li N."/>
            <person name="Zhao C."/>
            <person name="Li S."/>
            <person name="Dong L."/>
            <person name="Huang Y."/>
            <person name="Li L."/>
            <person name="Xi Y."/>
            <person name="Qi Q."/>
            <person name="Li W."/>
            <person name="Zhang B."/>
            <person name="Hu W."/>
            <person name="Zhang Y."/>
            <person name="Tian X."/>
            <person name="Jiao Y."/>
            <person name="Liang X."/>
            <person name="Jin J."/>
            <person name="Gao L."/>
            <person name="Zheng W."/>
            <person name="Hao B."/>
            <person name="Liu S.-M."/>
            <person name="Wang W."/>
            <person name="Yuan L."/>
            <person name="Cao M."/>
            <person name="McDermott J."/>
            <person name="Samudrala R."/>
            <person name="Wang J."/>
            <person name="Wong G.K.-S."/>
            <person name="Yang H."/>
        </authorList>
    </citation>
    <scope>NUCLEOTIDE SEQUENCE [LARGE SCALE GENOMIC DNA]</scope>
    <source>
        <strain>cv. Nipponbare</strain>
    </source>
</reference>
<reference key="6">
    <citation type="journal article" date="2003" name="Science">
        <title>Collection, mapping, and annotation of over 28,000 cDNA clones from japonica rice.</title>
        <authorList>
            <consortium name="The rice full-length cDNA consortium"/>
        </authorList>
    </citation>
    <scope>NUCLEOTIDE SEQUENCE [LARGE SCALE MRNA]</scope>
    <source>
        <strain>cv. Nipponbare</strain>
    </source>
</reference>
<reference key="7">
    <citation type="journal article" date="2016" name="Planta">
        <title>OsNF-YC2 and OsNF-YC4 proteins inhibit flowering under long-day conditions in rice.</title>
        <authorList>
            <person name="Kim S.K."/>
            <person name="Park H.Y."/>
            <person name="Jang Y.H."/>
            <person name="Lee K.C."/>
            <person name="Chung Y.S."/>
            <person name="Lee J.H."/>
            <person name="Kim J.K."/>
        </authorList>
    </citation>
    <scope>FUNCTION</scope>
    <scope>INTERACTION WITH NFYB8; NFYB10 AND HD5/NFYB11</scope>
    <scope>SUBCELLULAR LOCATION</scope>
    <scope>INDUCTION</scope>
</reference>
<feature type="chain" id="PRO_0000437435" description="Nuclear transcription factor Y subunit C-4">
    <location>
        <begin position="1"/>
        <end position="250"/>
    </location>
</feature>
<feature type="region of interest" description="Disordered" evidence="2">
    <location>
        <begin position="219"/>
        <end position="250"/>
    </location>
</feature>
<feature type="compositionally biased region" description="Acidic residues" evidence="2">
    <location>
        <begin position="238"/>
        <end position="250"/>
    </location>
</feature>
<proteinExistence type="evidence at protein level"/>
<organism>
    <name type="scientific">Oryza sativa subsp. japonica</name>
    <name type="common">Rice</name>
    <dbReference type="NCBI Taxonomy" id="39947"/>
    <lineage>
        <taxon>Eukaryota</taxon>
        <taxon>Viridiplantae</taxon>
        <taxon>Streptophyta</taxon>
        <taxon>Embryophyta</taxon>
        <taxon>Tracheophyta</taxon>
        <taxon>Spermatophyta</taxon>
        <taxon>Magnoliopsida</taxon>
        <taxon>Liliopsida</taxon>
        <taxon>Poales</taxon>
        <taxon>Poaceae</taxon>
        <taxon>BOP clade</taxon>
        <taxon>Oryzoideae</taxon>
        <taxon>Oryzeae</taxon>
        <taxon>Oryzinae</taxon>
        <taxon>Oryza</taxon>
        <taxon>Oryza sativa</taxon>
    </lineage>
</organism>
<protein>
    <recommendedName>
        <fullName evidence="7">Nuclear transcription factor Y subunit C-4</fullName>
        <shortName evidence="6">OsNF-YC4</shortName>
    </recommendedName>
    <alternativeName>
        <fullName evidence="7">Transcriptional activator HAP5B</fullName>
        <shortName evidence="5">OsHAP5B</shortName>
    </alternativeName>
</protein>